<organism>
    <name type="scientific">Schizosaccharomyces pombe (strain 972 / ATCC 24843)</name>
    <name type="common">Fission yeast</name>
    <dbReference type="NCBI Taxonomy" id="284812"/>
    <lineage>
        <taxon>Eukaryota</taxon>
        <taxon>Fungi</taxon>
        <taxon>Dikarya</taxon>
        <taxon>Ascomycota</taxon>
        <taxon>Taphrinomycotina</taxon>
        <taxon>Schizosaccharomycetes</taxon>
        <taxon>Schizosaccharomycetales</taxon>
        <taxon>Schizosaccharomycetaceae</taxon>
        <taxon>Schizosaccharomyces</taxon>
    </lineage>
</organism>
<sequence>MRQTNTHLETFSLFDDVCTCLLVDKVFYWSQIHKVRKLVDRSIERMESCSIINIITKYIIEQTDLDQAAKNILQFRELDPLLRRLSSTSLLAFTRHLKYYLSLYLPSCKFEICSTNQYFSSSKPEACVIARESINAGEDITDLCGTIIKLSPKEERNIGIGKDFSILHSSRLDSMCLFLGPARFVNHDCNANCRFNTSGKRIWLRCVRDIKPGEEITTFYSSNYFGLENCECLCVSCERMGINGFKKLFHTSATSTSCSSKSSSDVSDLSSLPQSNRYVISEEDRSFLNIWDSGGELSDASSSDLDEEFSLFIPRHKKRVWSREKRLLSEMAITNHSPLLNVDDYRKFREDLWKKRHGKRKVYQCSNCSQTFINEDIQNSSAFCPKCIRHSKLFSLPWPCRHKVNRELKLEKEKEINTKRNLVTSSHSMSLRHKKAVDYQS</sequence>
<keyword id="KW-0156">Chromatin regulator</keyword>
<keyword id="KW-0158">Chromosome</keyword>
<keyword id="KW-0489">Methyltransferase</keyword>
<keyword id="KW-0539">Nucleus</keyword>
<keyword id="KW-1185">Reference proteome</keyword>
<keyword id="KW-0949">S-adenosyl-L-methionine</keyword>
<keyword id="KW-0808">Transferase</keyword>
<feature type="chain" id="PRO_0000281807" description="Histone-lysine N-methyltransferase set9">
    <location>
        <begin position="1"/>
        <end position="441"/>
    </location>
</feature>
<feature type="domain" description="SET" evidence="1">
    <location>
        <begin position="108"/>
        <end position="221"/>
    </location>
</feature>
<feature type="mutagenesis site" description="Loss of function." evidence="3">
    <original>Y</original>
    <variation>A</variation>
    <location>
        <position position="220"/>
    </location>
</feature>
<comment type="function">
    <text evidence="3 4">Histone methyltransferase that specifically trimethylates 'Lys-20' of histone H4 to form H4K20me3. H4 'Lys-20' methylation is apparently not involved in the regulation of gene expression or heterochromatin function but participates in DNA damage response by giving a 'histone mark' required for the recruitment of the checkpoint protein Crb2 to sites of DNA damage.</text>
</comment>
<comment type="catalytic activity">
    <reaction evidence="2 3">
        <text>L-lysyl(20)-[histone H4] + 3 S-adenosyl-L-methionine = N(6),N(6),N(6)-trimethyl-L-lysyl(20)-[histone H4] + 3 S-adenosyl-L-homocysteine + 3 H(+)</text>
        <dbReference type="Rhea" id="RHEA:64456"/>
        <dbReference type="Rhea" id="RHEA-COMP:15554"/>
        <dbReference type="Rhea" id="RHEA-COMP:15998"/>
        <dbReference type="ChEBI" id="CHEBI:15378"/>
        <dbReference type="ChEBI" id="CHEBI:29969"/>
        <dbReference type="ChEBI" id="CHEBI:57856"/>
        <dbReference type="ChEBI" id="CHEBI:59789"/>
        <dbReference type="ChEBI" id="CHEBI:61961"/>
        <dbReference type="EC" id="2.1.1.372"/>
    </reaction>
</comment>
<comment type="subcellular location">
    <subcellularLocation>
        <location evidence="5">Nucleus</location>
    </subcellularLocation>
    <subcellularLocation>
        <location evidence="5">Chromosome</location>
    </subcellularLocation>
</comment>
<comment type="similarity">
    <text evidence="2">Belongs to the class V-like SAM-binding methyltransferase superfamily. Histone-lysine methyltransferase family. Suvar4-20 subfamily.</text>
</comment>
<accession>Q9USK2</accession>
<evidence type="ECO:0000255" key="1">
    <source>
        <dbReference type="PROSITE-ProRule" id="PRU00190"/>
    </source>
</evidence>
<evidence type="ECO:0000255" key="2">
    <source>
        <dbReference type="PROSITE-ProRule" id="PRU00900"/>
    </source>
</evidence>
<evidence type="ECO:0000269" key="3">
    <source>
    </source>
</evidence>
<evidence type="ECO:0000269" key="4">
    <source>
    </source>
</evidence>
<evidence type="ECO:0000305" key="5"/>
<gene>
    <name type="primary">set9</name>
    <name type="synonym">kmt5</name>
    <name type="ORF">SPCC4B3.12</name>
</gene>
<dbReference type="EC" id="2.1.1.372" evidence="3"/>
<dbReference type="EMBL" id="CU329672">
    <property type="protein sequence ID" value="CAB60686.1"/>
    <property type="molecule type" value="Genomic_DNA"/>
</dbReference>
<dbReference type="PIR" id="T50436">
    <property type="entry name" value="T50436"/>
</dbReference>
<dbReference type="RefSeq" id="NP_588078.1">
    <property type="nucleotide sequence ID" value="NM_001023070.2"/>
</dbReference>
<dbReference type="SMR" id="Q9USK2"/>
<dbReference type="BioGRID" id="276106">
    <property type="interactions" value="26"/>
</dbReference>
<dbReference type="FunCoup" id="Q9USK2">
    <property type="interactions" value="284"/>
</dbReference>
<dbReference type="STRING" id="284812.Q9USK2"/>
<dbReference type="PaxDb" id="4896-SPCC4B3.12.1"/>
<dbReference type="EnsemblFungi" id="SPCC4B3.12.1">
    <property type="protein sequence ID" value="SPCC4B3.12.1:pep"/>
    <property type="gene ID" value="SPCC4B3.12"/>
</dbReference>
<dbReference type="GeneID" id="2539545"/>
<dbReference type="KEGG" id="spo:2539545"/>
<dbReference type="PomBase" id="SPCC4B3.12">
    <property type="gene designation" value="set9"/>
</dbReference>
<dbReference type="VEuPathDB" id="FungiDB:SPCC4B3.12"/>
<dbReference type="eggNOG" id="KOG2589">
    <property type="taxonomic scope" value="Eukaryota"/>
</dbReference>
<dbReference type="HOGENOM" id="CLU_013724_0_0_1"/>
<dbReference type="InParanoid" id="Q9USK2"/>
<dbReference type="OMA" id="KFEICST"/>
<dbReference type="PhylomeDB" id="Q9USK2"/>
<dbReference type="BRENDA" id="2.1.1.372">
    <property type="organism ID" value="5613"/>
</dbReference>
<dbReference type="Reactome" id="R-SPO-3214841">
    <property type="pathway name" value="PKMTs methylate histone lysines"/>
</dbReference>
<dbReference type="PRO" id="PR:Q9USK2"/>
<dbReference type="Proteomes" id="UP000002485">
    <property type="component" value="Chromosome III"/>
</dbReference>
<dbReference type="GO" id="GO:0032153">
    <property type="term" value="C:cell division site"/>
    <property type="evidence" value="ECO:0007005"/>
    <property type="project" value="PomBase"/>
</dbReference>
<dbReference type="GO" id="GO:0000785">
    <property type="term" value="C:chromatin"/>
    <property type="evidence" value="ECO:0000305"/>
    <property type="project" value="PomBase"/>
</dbReference>
<dbReference type="GO" id="GO:0005829">
    <property type="term" value="C:cytosol"/>
    <property type="evidence" value="ECO:0007005"/>
    <property type="project" value="PomBase"/>
</dbReference>
<dbReference type="GO" id="GO:0044732">
    <property type="term" value="C:mitotic spindle pole body"/>
    <property type="evidence" value="ECO:0007005"/>
    <property type="project" value="PomBase"/>
</dbReference>
<dbReference type="GO" id="GO:0005634">
    <property type="term" value="C:nucleus"/>
    <property type="evidence" value="ECO:0007005"/>
    <property type="project" value="PomBase"/>
</dbReference>
<dbReference type="GO" id="GO:0042393">
    <property type="term" value="F:histone binding"/>
    <property type="evidence" value="ECO:0000314"/>
    <property type="project" value="PomBase"/>
</dbReference>
<dbReference type="GO" id="GO:0042799">
    <property type="term" value="F:histone H4K20 methyltransferase activity"/>
    <property type="evidence" value="ECO:0000318"/>
    <property type="project" value="GO_Central"/>
</dbReference>
<dbReference type="GO" id="GO:0140943">
    <property type="term" value="F:histone H4K20 trimethyltransferase activity"/>
    <property type="evidence" value="ECO:0000269"/>
    <property type="project" value="PomBase"/>
</dbReference>
<dbReference type="GO" id="GO:0031491">
    <property type="term" value="F:nucleosome binding"/>
    <property type="evidence" value="ECO:0000353"/>
    <property type="project" value="PomBase"/>
</dbReference>
<dbReference type="GO" id="GO:0032259">
    <property type="term" value="P:methylation"/>
    <property type="evidence" value="ECO:0007669"/>
    <property type="project" value="UniProtKB-KW"/>
</dbReference>
<dbReference type="GO" id="GO:0007095">
    <property type="term" value="P:mitotic G2 DNA damage checkpoint signaling"/>
    <property type="evidence" value="ECO:0000314"/>
    <property type="project" value="PomBase"/>
</dbReference>
<dbReference type="CDD" id="cd10524">
    <property type="entry name" value="SET_Suv4-20-like"/>
    <property type="match status" value="1"/>
</dbReference>
<dbReference type="FunFam" id="1.10.10.1700:FF:000001">
    <property type="entry name" value="Histone-lysine N-methyltransferase"/>
    <property type="match status" value="1"/>
</dbReference>
<dbReference type="Gene3D" id="1.10.10.1700">
    <property type="entry name" value="Histone-lysine N-methyltransferase"/>
    <property type="match status" value="1"/>
</dbReference>
<dbReference type="Gene3D" id="2.170.270.10">
    <property type="entry name" value="SET domain"/>
    <property type="match status" value="1"/>
</dbReference>
<dbReference type="InterPro" id="IPR041938">
    <property type="entry name" value="Hist-Lys_N-MTase_N"/>
</dbReference>
<dbReference type="InterPro" id="IPR025783">
    <property type="entry name" value="Set9_fungi"/>
</dbReference>
<dbReference type="InterPro" id="IPR001214">
    <property type="entry name" value="SET_dom"/>
</dbReference>
<dbReference type="InterPro" id="IPR046341">
    <property type="entry name" value="SET_dom_sf"/>
</dbReference>
<dbReference type="InterPro" id="IPR039977">
    <property type="entry name" value="Suv4-20/Set9"/>
</dbReference>
<dbReference type="PANTHER" id="PTHR12977:SF4">
    <property type="entry name" value="HISTONE-LYSINE N-METHYLTRANSFERASE KMT5B"/>
    <property type="match status" value="1"/>
</dbReference>
<dbReference type="PANTHER" id="PTHR12977">
    <property type="entry name" value="SUPPRESSOR OF VARIEGATION 4-20-RELATED"/>
    <property type="match status" value="1"/>
</dbReference>
<dbReference type="Pfam" id="PF00856">
    <property type="entry name" value="SET"/>
    <property type="match status" value="1"/>
</dbReference>
<dbReference type="SMART" id="SM00317">
    <property type="entry name" value="SET"/>
    <property type="match status" value="1"/>
</dbReference>
<dbReference type="SUPFAM" id="SSF82199">
    <property type="entry name" value="SET domain"/>
    <property type="match status" value="1"/>
</dbReference>
<dbReference type="PROSITE" id="PS51567">
    <property type="entry name" value="SAM_MT43_SUVAR420_1"/>
    <property type="match status" value="1"/>
</dbReference>
<dbReference type="PROSITE" id="PS50280">
    <property type="entry name" value="SET"/>
    <property type="match status" value="1"/>
</dbReference>
<protein>
    <recommendedName>
        <fullName>Histone-lysine N-methyltransferase set9</fullName>
        <ecNumber evidence="3">2.1.1.372</ecNumber>
    </recommendedName>
    <alternativeName>
        <fullName>Lysine N-methyltransferase 5</fullName>
    </alternativeName>
    <alternativeName>
        <fullName>SET domain protein 9</fullName>
    </alternativeName>
</protein>
<name>SET9_SCHPO</name>
<reference key="1">
    <citation type="journal article" date="2002" name="Nature">
        <title>The genome sequence of Schizosaccharomyces pombe.</title>
        <authorList>
            <person name="Wood V."/>
            <person name="Gwilliam R."/>
            <person name="Rajandream M.A."/>
            <person name="Lyne M.H."/>
            <person name="Lyne R."/>
            <person name="Stewart A."/>
            <person name="Sgouros J.G."/>
            <person name="Peat N."/>
            <person name="Hayles J."/>
            <person name="Baker S.G."/>
            <person name="Basham D."/>
            <person name="Bowman S."/>
            <person name="Brooks K."/>
            <person name="Brown D."/>
            <person name="Brown S."/>
            <person name="Chillingworth T."/>
            <person name="Churcher C.M."/>
            <person name="Collins M."/>
            <person name="Connor R."/>
            <person name="Cronin A."/>
            <person name="Davis P."/>
            <person name="Feltwell T."/>
            <person name="Fraser A."/>
            <person name="Gentles S."/>
            <person name="Goble A."/>
            <person name="Hamlin N."/>
            <person name="Harris D.E."/>
            <person name="Hidalgo J."/>
            <person name="Hodgson G."/>
            <person name="Holroyd S."/>
            <person name="Hornsby T."/>
            <person name="Howarth S."/>
            <person name="Huckle E.J."/>
            <person name="Hunt S."/>
            <person name="Jagels K."/>
            <person name="James K.D."/>
            <person name="Jones L."/>
            <person name="Jones M."/>
            <person name="Leather S."/>
            <person name="McDonald S."/>
            <person name="McLean J."/>
            <person name="Mooney P."/>
            <person name="Moule S."/>
            <person name="Mungall K.L."/>
            <person name="Murphy L.D."/>
            <person name="Niblett D."/>
            <person name="Odell C."/>
            <person name="Oliver K."/>
            <person name="O'Neil S."/>
            <person name="Pearson D."/>
            <person name="Quail M.A."/>
            <person name="Rabbinowitsch E."/>
            <person name="Rutherford K.M."/>
            <person name="Rutter S."/>
            <person name="Saunders D."/>
            <person name="Seeger K."/>
            <person name="Sharp S."/>
            <person name="Skelton J."/>
            <person name="Simmonds M.N."/>
            <person name="Squares R."/>
            <person name="Squares S."/>
            <person name="Stevens K."/>
            <person name="Taylor K."/>
            <person name="Taylor R.G."/>
            <person name="Tivey A."/>
            <person name="Walsh S.V."/>
            <person name="Warren T."/>
            <person name="Whitehead S."/>
            <person name="Woodward J.R."/>
            <person name="Volckaert G."/>
            <person name="Aert R."/>
            <person name="Robben J."/>
            <person name="Grymonprez B."/>
            <person name="Weltjens I."/>
            <person name="Vanstreels E."/>
            <person name="Rieger M."/>
            <person name="Schaefer M."/>
            <person name="Mueller-Auer S."/>
            <person name="Gabel C."/>
            <person name="Fuchs M."/>
            <person name="Duesterhoeft A."/>
            <person name="Fritzc C."/>
            <person name="Holzer E."/>
            <person name="Moestl D."/>
            <person name="Hilbert H."/>
            <person name="Borzym K."/>
            <person name="Langer I."/>
            <person name="Beck A."/>
            <person name="Lehrach H."/>
            <person name="Reinhardt R."/>
            <person name="Pohl T.M."/>
            <person name="Eger P."/>
            <person name="Zimmermann W."/>
            <person name="Wedler H."/>
            <person name="Wambutt R."/>
            <person name="Purnelle B."/>
            <person name="Goffeau A."/>
            <person name="Cadieu E."/>
            <person name="Dreano S."/>
            <person name="Gloux S."/>
            <person name="Lelaure V."/>
            <person name="Mottier S."/>
            <person name="Galibert F."/>
            <person name="Aves S.J."/>
            <person name="Xiang Z."/>
            <person name="Hunt C."/>
            <person name="Moore K."/>
            <person name="Hurst S.M."/>
            <person name="Lucas M."/>
            <person name="Rochet M."/>
            <person name="Gaillardin C."/>
            <person name="Tallada V.A."/>
            <person name="Garzon A."/>
            <person name="Thode G."/>
            <person name="Daga R.R."/>
            <person name="Cruzado L."/>
            <person name="Jimenez J."/>
            <person name="Sanchez M."/>
            <person name="del Rey F."/>
            <person name="Benito J."/>
            <person name="Dominguez A."/>
            <person name="Revuelta J.L."/>
            <person name="Moreno S."/>
            <person name="Armstrong J."/>
            <person name="Forsburg S.L."/>
            <person name="Cerutti L."/>
            <person name="Lowe T."/>
            <person name="McCombie W.R."/>
            <person name="Paulsen I."/>
            <person name="Potashkin J."/>
            <person name="Shpakovski G.V."/>
            <person name="Ussery D."/>
            <person name="Barrell B.G."/>
            <person name="Nurse P."/>
        </authorList>
    </citation>
    <scope>NUCLEOTIDE SEQUENCE [LARGE SCALE GENOMIC DNA]</scope>
    <source>
        <strain>972 / ATCC 24843</strain>
    </source>
</reference>
<reference key="2">
    <citation type="journal article" date="2004" name="Cell">
        <title>Methylation of histone H4 lysine 20 controls recruitment of Crb2 to sites of DNA damage.</title>
        <authorList>
            <person name="Sanders S.L."/>
            <person name="Portoso M."/>
            <person name="Mata J."/>
            <person name="Baehler J."/>
            <person name="Allshire R.C."/>
            <person name="Kouzarides T."/>
        </authorList>
    </citation>
    <scope>FUNCTION</scope>
    <scope>CATALYTIC ACTIVITY</scope>
    <scope>MUTAGENESIS OF TYR-220</scope>
</reference>
<reference key="3">
    <citation type="journal article" date="2009" name="Mol. Cell">
        <title>Regulation of Set9-mediated H4K20 methylation by a PWWP domain protein.</title>
        <authorList>
            <person name="Wang Y."/>
            <person name="Reddy B."/>
            <person name="Thompson J."/>
            <person name="Wang H."/>
            <person name="Noma K."/>
            <person name="Yates J.R. III"/>
            <person name="Jia S."/>
        </authorList>
    </citation>
    <scope>IDENTIFICATION BY MASS SPECTROMETRY</scope>
    <scope>INTERACTION WITH PDP1</scope>
    <scope>HISTONE-BINDING</scope>
    <scope>FUNCTION</scope>
</reference>
<proteinExistence type="evidence at protein level"/>